<sequence length="272" mass="30084">MGIRRCKPTSAGRRFVTYHDFSEITKDEPYKPLTTCIKKRKGRNNQGRITSWLKGGGNRKLYRIIDFKRNKHGIPAKIESIQYDPNRSARIALLKYMDGEYRYILAPDGLKVGDTIMSGSGIDIKVGNALPLKEIPLGTMIHNIELFPNGGGKLVRSAGTAAQLMAKEGKYAHVKLPSGEVRLINVNCFATIGQVSNLEHENVIIGKAGRTRHMGRRPSVRGVAMNPIDHPLGGGEGKSSGGRAACTPWGKPEGVKTRKNKRTDKFIIKRRK</sequence>
<accession>B5YG44</accession>
<evidence type="ECO:0000255" key="1">
    <source>
        <dbReference type="HAMAP-Rule" id="MF_01320"/>
    </source>
</evidence>
<evidence type="ECO:0000256" key="2">
    <source>
        <dbReference type="SAM" id="MobiDB-lite"/>
    </source>
</evidence>
<evidence type="ECO:0000305" key="3"/>
<reference key="1">
    <citation type="submission" date="2008-08" db="EMBL/GenBank/DDBJ databases">
        <title>The complete genome sequence of Thermodesulfovibrio yellowstonii strain ATCC 51303 / DSM 11347 / YP87.</title>
        <authorList>
            <person name="Dodson R.J."/>
            <person name="Durkin A.S."/>
            <person name="Wu M."/>
            <person name="Eisen J."/>
            <person name="Sutton G."/>
        </authorList>
    </citation>
    <scope>NUCLEOTIDE SEQUENCE [LARGE SCALE GENOMIC DNA]</scope>
    <source>
        <strain>ATCC 51303 / DSM 11347 / YP87</strain>
    </source>
</reference>
<proteinExistence type="inferred from homology"/>
<protein>
    <recommendedName>
        <fullName evidence="1">Large ribosomal subunit protein uL2</fullName>
    </recommendedName>
    <alternativeName>
        <fullName evidence="3">50S ribosomal protein L2</fullName>
    </alternativeName>
</protein>
<dbReference type="EMBL" id="CP001147">
    <property type="protein sequence ID" value="ACI22171.1"/>
    <property type="molecule type" value="Genomic_DNA"/>
</dbReference>
<dbReference type="RefSeq" id="WP_012546860.1">
    <property type="nucleotide sequence ID" value="NC_011296.1"/>
</dbReference>
<dbReference type="RefSeq" id="YP_002249242.1">
    <property type="nucleotide sequence ID" value="NC_011296.1"/>
</dbReference>
<dbReference type="SMR" id="B5YG44"/>
<dbReference type="FunCoup" id="B5YG44">
    <property type="interactions" value="576"/>
</dbReference>
<dbReference type="STRING" id="289376.THEYE_A1443"/>
<dbReference type="EnsemblBacteria" id="ACI22171">
    <property type="protein sequence ID" value="ACI22171"/>
    <property type="gene ID" value="THEYE_A1443"/>
</dbReference>
<dbReference type="KEGG" id="tye:THEYE_A1443"/>
<dbReference type="PATRIC" id="fig|289376.4.peg.1404"/>
<dbReference type="eggNOG" id="COG0090">
    <property type="taxonomic scope" value="Bacteria"/>
</dbReference>
<dbReference type="HOGENOM" id="CLU_036235_2_1_0"/>
<dbReference type="InParanoid" id="B5YG44"/>
<dbReference type="OrthoDB" id="9778722at2"/>
<dbReference type="Proteomes" id="UP000000718">
    <property type="component" value="Chromosome"/>
</dbReference>
<dbReference type="GO" id="GO:0015934">
    <property type="term" value="C:large ribosomal subunit"/>
    <property type="evidence" value="ECO:0007669"/>
    <property type="project" value="InterPro"/>
</dbReference>
<dbReference type="GO" id="GO:0003723">
    <property type="term" value="F:RNA binding"/>
    <property type="evidence" value="ECO:0000318"/>
    <property type="project" value="GO_Central"/>
</dbReference>
<dbReference type="GO" id="GO:0019843">
    <property type="term" value="F:rRNA binding"/>
    <property type="evidence" value="ECO:0007669"/>
    <property type="project" value="UniProtKB-UniRule"/>
</dbReference>
<dbReference type="GO" id="GO:0003735">
    <property type="term" value="F:structural constituent of ribosome"/>
    <property type="evidence" value="ECO:0000318"/>
    <property type="project" value="GO_Central"/>
</dbReference>
<dbReference type="GO" id="GO:0016740">
    <property type="term" value="F:transferase activity"/>
    <property type="evidence" value="ECO:0007669"/>
    <property type="project" value="InterPro"/>
</dbReference>
<dbReference type="GO" id="GO:0002181">
    <property type="term" value="P:cytoplasmic translation"/>
    <property type="evidence" value="ECO:0000318"/>
    <property type="project" value="GO_Central"/>
</dbReference>
<dbReference type="FunFam" id="2.30.30.30:FF:000001">
    <property type="entry name" value="50S ribosomal protein L2"/>
    <property type="match status" value="1"/>
</dbReference>
<dbReference type="FunFam" id="2.40.50.140:FF:000003">
    <property type="entry name" value="50S ribosomal protein L2"/>
    <property type="match status" value="1"/>
</dbReference>
<dbReference type="FunFam" id="4.10.950.10:FF:000001">
    <property type="entry name" value="50S ribosomal protein L2"/>
    <property type="match status" value="1"/>
</dbReference>
<dbReference type="Gene3D" id="2.30.30.30">
    <property type="match status" value="1"/>
</dbReference>
<dbReference type="Gene3D" id="2.40.50.140">
    <property type="entry name" value="Nucleic acid-binding proteins"/>
    <property type="match status" value="1"/>
</dbReference>
<dbReference type="Gene3D" id="4.10.950.10">
    <property type="entry name" value="Ribosomal protein L2, domain 3"/>
    <property type="match status" value="1"/>
</dbReference>
<dbReference type="HAMAP" id="MF_01320_B">
    <property type="entry name" value="Ribosomal_uL2_B"/>
    <property type="match status" value="1"/>
</dbReference>
<dbReference type="InterPro" id="IPR012340">
    <property type="entry name" value="NA-bd_OB-fold"/>
</dbReference>
<dbReference type="InterPro" id="IPR014722">
    <property type="entry name" value="Rib_uL2_dom2"/>
</dbReference>
<dbReference type="InterPro" id="IPR002171">
    <property type="entry name" value="Ribosomal_uL2"/>
</dbReference>
<dbReference type="InterPro" id="IPR005880">
    <property type="entry name" value="Ribosomal_uL2_bac/org-type"/>
</dbReference>
<dbReference type="InterPro" id="IPR022669">
    <property type="entry name" value="Ribosomal_uL2_C"/>
</dbReference>
<dbReference type="InterPro" id="IPR022671">
    <property type="entry name" value="Ribosomal_uL2_CS"/>
</dbReference>
<dbReference type="InterPro" id="IPR014726">
    <property type="entry name" value="Ribosomal_uL2_dom3"/>
</dbReference>
<dbReference type="InterPro" id="IPR022666">
    <property type="entry name" value="Ribosomal_uL2_RNA-bd_dom"/>
</dbReference>
<dbReference type="InterPro" id="IPR008991">
    <property type="entry name" value="Translation_prot_SH3-like_sf"/>
</dbReference>
<dbReference type="NCBIfam" id="TIGR01171">
    <property type="entry name" value="rplB_bact"/>
    <property type="match status" value="1"/>
</dbReference>
<dbReference type="PANTHER" id="PTHR13691:SF5">
    <property type="entry name" value="LARGE RIBOSOMAL SUBUNIT PROTEIN UL2M"/>
    <property type="match status" value="1"/>
</dbReference>
<dbReference type="PANTHER" id="PTHR13691">
    <property type="entry name" value="RIBOSOMAL PROTEIN L2"/>
    <property type="match status" value="1"/>
</dbReference>
<dbReference type="Pfam" id="PF00181">
    <property type="entry name" value="Ribosomal_L2"/>
    <property type="match status" value="1"/>
</dbReference>
<dbReference type="Pfam" id="PF03947">
    <property type="entry name" value="Ribosomal_L2_C"/>
    <property type="match status" value="1"/>
</dbReference>
<dbReference type="PIRSF" id="PIRSF002158">
    <property type="entry name" value="Ribosomal_L2"/>
    <property type="match status" value="1"/>
</dbReference>
<dbReference type="SMART" id="SM01383">
    <property type="entry name" value="Ribosomal_L2"/>
    <property type="match status" value="1"/>
</dbReference>
<dbReference type="SMART" id="SM01382">
    <property type="entry name" value="Ribosomal_L2_C"/>
    <property type="match status" value="1"/>
</dbReference>
<dbReference type="SUPFAM" id="SSF50249">
    <property type="entry name" value="Nucleic acid-binding proteins"/>
    <property type="match status" value="1"/>
</dbReference>
<dbReference type="SUPFAM" id="SSF50104">
    <property type="entry name" value="Translation proteins SH3-like domain"/>
    <property type="match status" value="1"/>
</dbReference>
<dbReference type="PROSITE" id="PS00467">
    <property type="entry name" value="RIBOSOMAL_L2"/>
    <property type="match status" value="1"/>
</dbReference>
<comment type="function">
    <text evidence="1">One of the primary rRNA binding proteins. Required for association of the 30S and 50S subunits to form the 70S ribosome, for tRNA binding and peptide bond formation. It has been suggested to have peptidyltransferase activity; this is somewhat controversial. Makes several contacts with the 16S rRNA in the 70S ribosome.</text>
</comment>
<comment type="subunit">
    <text evidence="1">Part of the 50S ribosomal subunit. Forms a bridge to the 30S subunit in the 70S ribosome.</text>
</comment>
<comment type="similarity">
    <text evidence="1">Belongs to the universal ribosomal protein uL2 family.</text>
</comment>
<name>RL2_THEYD</name>
<organism>
    <name type="scientific">Thermodesulfovibrio yellowstonii (strain ATCC 51303 / DSM 11347 / YP87)</name>
    <dbReference type="NCBI Taxonomy" id="289376"/>
    <lineage>
        <taxon>Bacteria</taxon>
        <taxon>Pseudomonadati</taxon>
        <taxon>Nitrospirota</taxon>
        <taxon>Thermodesulfovibrionia</taxon>
        <taxon>Thermodesulfovibrionales</taxon>
        <taxon>Thermodesulfovibrionaceae</taxon>
        <taxon>Thermodesulfovibrio</taxon>
    </lineage>
</organism>
<keyword id="KW-1185">Reference proteome</keyword>
<keyword id="KW-0687">Ribonucleoprotein</keyword>
<keyword id="KW-0689">Ribosomal protein</keyword>
<keyword id="KW-0694">RNA-binding</keyword>
<keyword id="KW-0699">rRNA-binding</keyword>
<feature type="chain" id="PRO_1000141634" description="Large ribosomal subunit protein uL2">
    <location>
        <begin position="1"/>
        <end position="272"/>
    </location>
</feature>
<feature type="region of interest" description="Disordered" evidence="2">
    <location>
        <begin position="222"/>
        <end position="272"/>
    </location>
</feature>
<feature type="compositionally biased region" description="Basic and acidic residues" evidence="2">
    <location>
        <begin position="263"/>
        <end position="272"/>
    </location>
</feature>
<gene>
    <name evidence="1" type="primary">rplB</name>
    <name type="ordered locus">THEYE_A1443</name>
</gene>